<accession>B7M521</accession>
<dbReference type="EMBL" id="CU928160">
    <property type="protein sequence ID" value="CAQ99098.1"/>
    <property type="status" value="ALT_INIT"/>
    <property type="molecule type" value="Genomic_DNA"/>
</dbReference>
<dbReference type="RefSeq" id="WP_001136827.1">
    <property type="nucleotide sequence ID" value="NC_011741.1"/>
</dbReference>
<dbReference type="SMR" id="B7M521"/>
<dbReference type="GeneID" id="93775010"/>
<dbReference type="KEGG" id="ecr:ECIAI1_2253"/>
<dbReference type="HOGENOM" id="CLU_074944_2_0_6"/>
<dbReference type="GO" id="GO:0005829">
    <property type="term" value="C:cytosol"/>
    <property type="evidence" value="ECO:0007669"/>
    <property type="project" value="UniProtKB-ARBA"/>
</dbReference>
<dbReference type="GO" id="GO:0003746">
    <property type="term" value="F:translation elongation factor activity"/>
    <property type="evidence" value="ECO:0007669"/>
    <property type="project" value="UniProtKB-UniRule"/>
</dbReference>
<dbReference type="GO" id="GO:0043043">
    <property type="term" value="P:peptide biosynthetic process"/>
    <property type="evidence" value="ECO:0007669"/>
    <property type="project" value="InterPro"/>
</dbReference>
<dbReference type="CDD" id="cd04470">
    <property type="entry name" value="S1_EF-P_repeat_1"/>
    <property type="match status" value="1"/>
</dbReference>
<dbReference type="CDD" id="cd05794">
    <property type="entry name" value="S1_EF-P_repeat_2"/>
    <property type="match status" value="1"/>
</dbReference>
<dbReference type="FunFam" id="2.40.50.140:FF:000004">
    <property type="entry name" value="Elongation factor P"/>
    <property type="match status" value="1"/>
</dbReference>
<dbReference type="FunFam" id="2.30.30.30:FF:000011">
    <property type="entry name" value="Elongation factor P-like protein"/>
    <property type="match status" value="1"/>
</dbReference>
<dbReference type="FunFam" id="2.40.50.140:FF:000053">
    <property type="entry name" value="Elongation factor P-like protein"/>
    <property type="match status" value="1"/>
</dbReference>
<dbReference type="Gene3D" id="2.30.30.30">
    <property type="match status" value="1"/>
</dbReference>
<dbReference type="Gene3D" id="2.40.50.140">
    <property type="entry name" value="Nucleic acid-binding proteins"/>
    <property type="match status" value="2"/>
</dbReference>
<dbReference type="HAMAP" id="MF_00646">
    <property type="entry name" value="EFP"/>
    <property type="match status" value="1"/>
</dbReference>
<dbReference type="InterPro" id="IPR015365">
    <property type="entry name" value="Elong-fact-P_C"/>
</dbReference>
<dbReference type="InterPro" id="IPR012340">
    <property type="entry name" value="NA-bd_OB-fold"/>
</dbReference>
<dbReference type="InterPro" id="IPR014722">
    <property type="entry name" value="Rib_uL2_dom2"/>
</dbReference>
<dbReference type="InterPro" id="IPR020599">
    <property type="entry name" value="Transl_elong_fac_P/YeiP"/>
</dbReference>
<dbReference type="InterPro" id="IPR013185">
    <property type="entry name" value="Transl_elong_KOW-like"/>
</dbReference>
<dbReference type="InterPro" id="IPR011897">
    <property type="entry name" value="Transl_elong_p-like_YeiP"/>
</dbReference>
<dbReference type="InterPro" id="IPR001059">
    <property type="entry name" value="Transl_elong_P/YeiP_cen"/>
</dbReference>
<dbReference type="InterPro" id="IPR013852">
    <property type="entry name" value="Transl_elong_P/YeiP_CS"/>
</dbReference>
<dbReference type="InterPro" id="IPR008991">
    <property type="entry name" value="Translation_prot_SH3-like_sf"/>
</dbReference>
<dbReference type="NCBIfam" id="NF001810">
    <property type="entry name" value="PRK00529.1"/>
    <property type="match status" value="1"/>
</dbReference>
<dbReference type="NCBIfam" id="NF003392">
    <property type="entry name" value="PRK04542.1"/>
    <property type="match status" value="1"/>
</dbReference>
<dbReference type="NCBIfam" id="TIGR02178">
    <property type="entry name" value="yeiP"/>
    <property type="match status" value="1"/>
</dbReference>
<dbReference type="PANTHER" id="PTHR30053">
    <property type="entry name" value="ELONGATION FACTOR P"/>
    <property type="match status" value="1"/>
</dbReference>
<dbReference type="PANTHER" id="PTHR30053:SF14">
    <property type="entry name" value="TRANSLATION ELONGATION FACTOR KOW-LIKE DOMAIN-CONTAINING PROTEIN"/>
    <property type="match status" value="1"/>
</dbReference>
<dbReference type="Pfam" id="PF01132">
    <property type="entry name" value="EFP"/>
    <property type="match status" value="1"/>
</dbReference>
<dbReference type="Pfam" id="PF08207">
    <property type="entry name" value="EFP_N"/>
    <property type="match status" value="1"/>
</dbReference>
<dbReference type="Pfam" id="PF09285">
    <property type="entry name" value="Elong-fact-P_C"/>
    <property type="match status" value="1"/>
</dbReference>
<dbReference type="PIRSF" id="PIRSF005901">
    <property type="entry name" value="EF-P"/>
    <property type="match status" value="1"/>
</dbReference>
<dbReference type="SMART" id="SM01185">
    <property type="entry name" value="EFP"/>
    <property type="match status" value="1"/>
</dbReference>
<dbReference type="SMART" id="SM00841">
    <property type="entry name" value="Elong-fact-P_C"/>
    <property type="match status" value="1"/>
</dbReference>
<dbReference type="SUPFAM" id="SSF50249">
    <property type="entry name" value="Nucleic acid-binding proteins"/>
    <property type="match status" value="2"/>
</dbReference>
<dbReference type="SUPFAM" id="SSF50104">
    <property type="entry name" value="Translation proteins SH3-like domain"/>
    <property type="match status" value="1"/>
</dbReference>
<dbReference type="PROSITE" id="PS01275">
    <property type="entry name" value="EFP"/>
    <property type="match status" value="1"/>
</dbReference>
<organism>
    <name type="scientific">Escherichia coli O8 (strain IAI1)</name>
    <dbReference type="NCBI Taxonomy" id="585034"/>
    <lineage>
        <taxon>Bacteria</taxon>
        <taxon>Pseudomonadati</taxon>
        <taxon>Pseudomonadota</taxon>
        <taxon>Gammaproteobacteria</taxon>
        <taxon>Enterobacterales</taxon>
        <taxon>Enterobacteriaceae</taxon>
        <taxon>Escherichia</taxon>
    </lineage>
</organism>
<comment type="similarity">
    <text evidence="1">Belongs to the elongation factor P family.</text>
</comment>
<comment type="sequence caution" evidence="2">
    <conflict type="erroneous initiation">
        <sequence resource="EMBL-CDS" id="CAQ99098"/>
    </conflict>
</comment>
<protein>
    <recommendedName>
        <fullName evidence="1">Elongation factor P-like protein</fullName>
    </recommendedName>
</protein>
<reference key="1">
    <citation type="journal article" date="2009" name="PLoS Genet.">
        <title>Organised genome dynamics in the Escherichia coli species results in highly diverse adaptive paths.</title>
        <authorList>
            <person name="Touchon M."/>
            <person name="Hoede C."/>
            <person name="Tenaillon O."/>
            <person name="Barbe V."/>
            <person name="Baeriswyl S."/>
            <person name="Bidet P."/>
            <person name="Bingen E."/>
            <person name="Bonacorsi S."/>
            <person name="Bouchier C."/>
            <person name="Bouvet O."/>
            <person name="Calteau A."/>
            <person name="Chiapello H."/>
            <person name="Clermont O."/>
            <person name="Cruveiller S."/>
            <person name="Danchin A."/>
            <person name="Diard M."/>
            <person name="Dossat C."/>
            <person name="Karoui M.E."/>
            <person name="Frapy E."/>
            <person name="Garry L."/>
            <person name="Ghigo J.M."/>
            <person name="Gilles A.M."/>
            <person name="Johnson J."/>
            <person name="Le Bouguenec C."/>
            <person name="Lescat M."/>
            <person name="Mangenot S."/>
            <person name="Martinez-Jehanne V."/>
            <person name="Matic I."/>
            <person name="Nassif X."/>
            <person name="Oztas S."/>
            <person name="Petit M.A."/>
            <person name="Pichon C."/>
            <person name="Rouy Z."/>
            <person name="Ruf C.S."/>
            <person name="Schneider D."/>
            <person name="Tourret J."/>
            <person name="Vacherie B."/>
            <person name="Vallenet D."/>
            <person name="Medigue C."/>
            <person name="Rocha E.P.C."/>
            <person name="Denamur E."/>
        </authorList>
    </citation>
    <scope>NUCLEOTIDE SEQUENCE [LARGE SCALE GENOMIC DNA]</scope>
    <source>
        <strain>IAI1</strain>
    </source>
</reference>
<proteinExistence type="inferred from homology"/>
<gene>
    <name evidence="1" type="primary">yeiP</name>
    <name type="ordered locus">ECIAI1_2253</name>
</gene>
<evidence type="ECO:0000255" key="1">
    <source>
        <dbReference type="HAMAP-Rule" id="MF_00646"/>
    </source>
</evidence>
<evidence type="ECO:0000305" key="2"/>
<sequence length="190" mass="21533">MPRANEIKKGMVLNYNGKLLLVKDIDIQSPTARGAATLYKMRFSDVRTGLKVEERFKGDDIVDTVTLTRRYVDFSYVDGNEYVFMDKEDYTPYTFTKDQIEEELLFMPEGGMPDMQVLTWDGQLLALELPQTVDLEIVETAPGIKGASASARNKPATLSTGLVIQVPEYLSPGEKIRIHIEERRYMGRAD</sequence>
<feature type="chain" id="PRO_0000384915" description="Elongation factor P-like protein">
    <location>
        <begin position="1"/>
        <end position="190"/>
    </location>
</feature>
<name>EFPL_ECO8A</name>